<keyword id="KW-0027">Amidation</keyword>
<keyword id="KW-0878">Amphibian defense peptide</keyword>
<keyword id="KW-0044">Antibiotic</keyword>
<keyword id="KW-0929">Antimicrobial</keyword>
<keyword id="KW-0165">Cleavage on pair of basic residues</keyword>
<keyword id="KW-0903">Direct protein sequencing</keyword>
<keyword id="KW-0964">Secreted</keyword>
<keyword id="KW-0732">Signal</keyword>
<protein>
    <recommendedName>
        <fullName evidence="4">Dermaseptin-related peptide</fullName>
    </recommendedName>
    <alternativeName>
        <fullName evidence="7">DRP-AC4</fullName>
    </alternativeName>
</protein>
<feature type="signal peptide" evidence="1">
    <location>
        <begin position="1"/>
        <end position="22"/>
    </location>
</feature>
<feature type="propeptide" id="PRO_0000442273" evidence="6">
    <location>
        <begin position="23"/>
        <end position="43"/>
    </location>
</feature>
<feature type="peptide" id="PRO_0000442274" description="Dermaseptin-related peptide" evidence="3">
    <location>
        <begin position="46"/>
        <end position="72"/>
    </location>
</feature>
<feature type="propeptide" id="PRO_0000442275" evidence="6">
    <location>
        <begin position="74"/>
        <end position="75"/>
    </location>
</feature>
<feature type="region of interest" description="Disordered" evidence="2">
    <location>
        <begin position="24"/>
        <end position="44"/>
    </location>
</feature>
<feature type="compositionally biased region" description="Acidic residues" evidence="2">
    <location>
        <begin position="30"/>
        <end position="40"/>
    </location>
</feature>
<feature type="modified residue" description="Glutamine amide" evidence="3">
    <location>
        <position position="72"/>
    </location>
</feature>
<accession>B6HY16</accession>
<reference evidence="7" key="1">
    <citation type="journal article" date="2008" name="Biochimie">
        <title>Novel dermaseptin, adenoregulin and caerin homologs from the Central American red-eyed leaf frog, Agalychnis callidryas, revealed by functional peptidomics of defensive skin secretion.</title>
        <authorList>
            <person name="Wang L."/>
            <person name="Zhou M."/>
            <person name="McClelland A."/>
            <person name="Reilly A."/>
            <person name="Chen T."/>
            <person name="Gagliardo R."/>
            <person name="Walker B."/>
            <person name="Shaw C."/>
        </authorList>
    </citation>
    <scope>NUCLEOTIDE SEQUENCE [MRNA]</scope>
    <scope>PROTEIN SEQUENCE OF 46-72</scope>
    <scope>FUNCTION</scope>
    <scope>SUBCELLULAR LOCATION</scope>
    <scope>MASS SPECTROMETRY</scope>
    <scope>AMIDATION AT GLN-72</scope>
    <source>
        <tissue evidence="4">Skin secretion</tissue>
    </source>
</reference>
<sequence>MAFLNKSLLLVLFLGLVSLSICEEERRENEDEEEQEDDEQSEMRRSLLSTLGNMAKAAGRAALNAITGLVNQGEQ</sequence>
<evidence type="ECO:0000255" key="1"/>
<evidence type="ECO:0000256" key="2">
    <source>
        <dbReference type="SAM" id="MobiDB-lite"/>
    </source>
</evidence>
<evidence type="ECO:0000269" key="3">
    <source>
    </source>
</evidence>
<evidence type="ECO:0000303" key="4">
    <source>
    </source>
</evidence>
<evidence type="ECO:0000305" key="5"/>
<evidence type="ECO:0000305" key="6">
    <source>
    </source>
</evidence>
<evidence type="ECO:0000312" key="7">
    <source>
        <dbReference type="EMBL" id="CAQ16442.1"/>
    </source>
</evidence>
<organism evidence="7">
    <name type="scientific">Agalychnis callidryas</name>
    <name type="common">Red-eyed tree frog</name>
    <name type="synonym">Phyllomedusa callidryas</name>
    <dbReference type="NCBI Taxonomy" id="197464"/>
    <lineage>
        <taxon>Eukaryota</taxon>
        <taxon>Metazoa</taxon>
        <taxon>Chordata</taxon>
        <taxon>Craniata</taxon>
        <taxon>Vertebrata</taxon>
        <taxon>Euteleostomi</taxon>
        <taxon>Amphibia</taxon>
        <taxon>Batrachia</taxon>
        <taxon>Anura</taxon>
        <taxon>Neobatrachia</taxon>
        <taxon>Hyloidea</taxon>
        <taxon>Hylidae</taxon>
        <taxon>Phyllomedusinae</taxon>
        <taxon>Agalychnis</taxon>
    </lineage>
</organism>
<comment type="function">
    <text evidence="3">Has antibacterial activity against Gram-positive bacterium M.luteus NCT C2665 but not against Gram-negative bacterium E.coli K12D31.</text>
</comment>
<comment type="subcellular location">
    <subcellularLocation>
        <location evidence="3">Secreted</location>
    </subcellularLocation>
</comment>
<comment type="tissue specificity">
    <text evidence="6">Expressed by the skin glands.</text>
</comment>
<comment type="mass spectrometry"/>
<comment type="similarity">
    <text evidence="5">Belongs to the frog skin active peptide (FSAP) family. Dermaseptin subfamily.</text>
</comment>
<name>DRS4_AGACL</name>
<proteinExistence type="evidence at protein level"/>
<dbReference type="EMBL" id="AM944842">
    <property type="protein sequence ID" value="CAQ16442.1"/>
    <property type="molecule type" value="mRNA"/>
</dbReference>
<dbReference type="GO" id="GO:0005576">
    <property type="term" value="C:extracellular region"/>
    <property type="evidence" value="ECO:0007669"/>
    <property type="project" value="UniProtKB-SubCell"/>
</dbReference>
<dbReference type="GO" id="GO:0042742">
    <property type="term" value="P:defense response to bacterium"/>
    <property type="evidence" value="ECO:0007669"/>
    <property type="project" value="UniProtKB-KW"/>
</dbReference>
<dbReference type="InterPro" id="IPR022731">
    <property type="entry name" value="Dermaseptin_dom"/>
</dbReference>
<dbReference type="InterPro" id="IPR004275">
    <property type="entry name" value="Frog_antimicrobial_propeptide"/>
</dbReference>
<dbReference type="InterPro" id="IPR016322">
    <property type="entry name" value="FSAP"/>
</dbReference>
<dbReference type="Pfam" id="PF12121">
    <property type="entry name" value="DD_K"/>
    <property type="match status" value="1"/>
</dbReference>
<dbReference type="Pfam" id="PF03032">
    <property type="entry name" value="FSAP_sig_propep"/>
    <property type="match status" value="1"/>
</dbReference>
<dbReference type="PIRSF" id="PIRSF001822">
    <property type="entry name" value="Dermaseptin_precursor"/>
    <property type="match status" value="1"/>
</dbReference>